<accession>Q5HSV2</accession>
<gene>
    <name evidence="1" type="primary">rpsI</name>
    <name type="ordered locus">CJE1652</name>
</gene>
<keyword id="KW-0687">Ribonucleoprotein</keyword>
<keyword id="KW-0689">Ribosomal protein</keyword>
<comment type="similarity">
    <text evidence="1">Belongs to the universal ribosomal protein uS9 family.</text>
</comment>
<name>RS9_CAMJR</name>
<organism>
    <name type="scientific">Campylobacter jejuni (strain RM1221)</name>
    <dbReference type="NCBI Taxonomy" id="195099"/>
    <lineage>
        <taxon>Bacteria</taxon>
        <taxon>Pseudomonadati</taxon>
        <taxon>Campylobacterota</taxon>
        <taxon>Epsilonproteobacteria</taxon>
        <taxon>Campylobacterales</taxon>
        <taxon>Campylobacteraceae</taxon>
        <taxon>Campylobacter</taxon>
    </lineage>
</organism>
<protein>
    <recommendedName>
        <fullName evidence="1">Small ribosomal subunit protein uS9</fullName>
    </recommendedName>
    <alternativeName>
        <fullName evidence="3">30S ribosomal protein S9</fullName>
    </alternativeName>
</protein>
<feature type="chain" id="PRO_1000051197" description="Small ribosomal subunit protein uS9">
    <location>
        <begin position="1"/>
        <end position="129"/>
    </location>
</feature>
<feature type="region of interest" description="Disordered" evidence="2">
    <location>
        <begin position="107"/>
        <end position="129"/>
    </location>
</feature>
<feature type="compositionally biased region" description="Basic residues" evidence="2">
    <location>
        <begin position="114"/>
        <end position="129"/>
    </location>
</feature>
<evidence type="ECO:0000255" key="1">
    <source>
        <dbReference type="HAMAP-Rule" id="MF_00532"/>
    </source>
</evidence>
<evidence type="ECO:0000256" key="2">
    <source>
        <dbReference type="SAM" id="MobiDB-lite"/>
    </source>
</evidence>
<evidence type="ECO:0000305" key="3"/>
<reference key="1">
    <citation type="journal article" date="2005" name="PLoS Biol.">
        <title>Major structural differences and novel potential virulence mechanisms from the genomes of multiple Campylobacter species.</title>
        <authorList>
            <person name="Fouts D.E."/>
            <person name="Mongodin E.F."/>
            <person name="Mandrell R.E."/>
            <person name="Miller W.G."/>
            <person name="Rasko D.A."/>
            <person name="Ravel J."/>
            <person name="Brinkac L.M."/>
            <person name="DeBoy R.T."/>
            <person name="Parker C.T."/>
            <person name="Daugherty S.C."/>
            <person name="Dodson R.J."/>
            <person name="Durkin A.S."/>
            <person name="Madupu R."/>
            <person name="Sullivan S.A."/>
            <person name="Shetty J.U."/>
            <person name="Ayodeji M.A."/>
            <person name="Shvartsbeyn A."/>
            <person name="Schatz M.C."/>
            <person name="Badger J.H."/>
            <person name="Fraser C.M."/>
            <person name="Nelson K.E."/>
        </authorList>
    </citation>
    <scope>NUCLEOTIDE SEQUENCE [LARGE SCALE GENOMIC DNA]</scope>
    <source>
        <strain>RM1221</strain>
    </source>
</reference>
<dbReference type="EMBL" id="CP000025">
    <property type="protein sequence ID" value="AAW36085.1"/>
    <property type="molecule type" value="Genomic_DNA"/>
</dbReference>
<dbReference type="RefSeq" id="WP_002851459.1">
    <property type="nucleotide sequence ID" value="NC_003912.7"/>
</dbReference>
<dbReference type="SMR" id="Q5HSV2"/>
<dbReference type="KEGG" id="cjr:CJE1652"/>
<dbReference type="HOGENOM" id="CLU_046483_2_1_7"/>
<dbReference type="GO" id="GO:0022627">
    <property type="term" value="C:cytosolic small ribosomal subunit"/>
    <property type="evidence" value="ECO:0007669"/>
    <property type="project" value="TreeGrafter"/>
</dbReference>
<dbReference type="GO" id="GO:0003723">
    <property type="term" value="F:RNA binding"/>
    <property type="evidence" value="ECO:0007669"/>
    <property type="project" value="TreeGrafter"/>
</dbReference>
<dbReference type="GO" id="GO:0003735">
    <property type="term" value="F:structural constituent of ribosome"/>
    <property type="evidence" value="ECO:0007669"/>
    <property type="project" value="InterPro"/>
</dbReference>
<dbReference type="GO" id="GO:0006412">
    <property type="term" value="P:translation"/>
    <property type="evidence" value="ECO:0007669"/>
    <property type="project" value="UniProtKB-UniRule"/>
</dbReference>
<dbReference type="FunFam" id="3.30.230.10:FF:000025">
    <property type="entry name" value="30S ribosomal protein S9"/>
    <property type="match status" value="1"/>
</dbReference>
<dbReference type="Gene3D" id="3.30.230.10">
    <property type="match status" value="1"/>
</dbReference>
<dbReference type="HAMAP" id="MF_00532_B">
    <property type="entry name" value="Ribosomal_uS9_B"/>
    <property type="match status" value="1"/>
</dbReference>
<dbReference type="InterPro" id="IPR020568">
    <property type="entry name" value="Ribosomal_Su5_D2-typ_SF"/>
</dbReference>
<dbReference type="InterPro" id="IPR000754">
    <property type="entry name" value="Ribosomal_uS9"/>
</dbReference>
<dbReference type="InterPro" id="IPR023035">
    <property type="entry name" value="Ribosomal_uS9_bac/plastid"/>
</dbReference>
<dbReference type="InterPro" id="IPR020574">
    <property type="entry name" value="Ribosomal_uS9_CS"/>
</dbReference>
<dbReference type="InterPro" id="IPR014721">
    <property type="entry name" value="Ribsml_uS5_D2-typ_fold_subgr"/>
</dbReference>
<dbReference type="NCBIfam" id="NF001099">
    <property type="entry name" value="PRK00132.1"/>
    <property type="match status" value="1"/>
</dbReference>
<dbReference type="PANTHER" id="PTHR21569">
    <property type="entry name" value="RIBOSOMAL PROTEIN S9"/>
    <property type="match status" value="1"/>
</dbReference>
<dbReference type="PANTHER" id="PTHR21569:SF1">
    <property type="entry name" value="SMALL RIBOSOMAL SUBUNIT PROTEIN US9M"/>
    <property type="match status" value="1"/>
</dbReference>
<dbReference type="Pfam" id="PF00380">
    <property type="entry name" value="Ribosomal_S9"/>
    <property type="match status" value="1"/>
</dbReference>
<dbReference type="SUPFAM" id="SSF54211">
    <property type="entry name" value="Ribosomal protein S5 domain 2-like"/>
    <property type="match status" value="1"/>
</dbReference>
<dbReference type="PROSITE" id="PS00360">
    <property type="entry name" value="RIBOSOMAL_S9"/>
    <property type="match status" value="1"/>
</dbReference>
<proteinExistence type="inferred from homology"/>
<sequence>MATTYATGKRKTAIAKVWVKPGSGKISVNGVDLNTWLGGHEAIKLKVVQPLLVTKQETSMDIKATTLGGGYSAQAEALRHGISRALAAMDADFRALLKPKGLLTRDSRTVERKKYGRRKARRSPQFSKR</sequence>